<comment type="function">
    <text evidence="1">IGPS catalyzes the conversion of PRFAR and glutamine to IGP, AICAR and glutamate. The HisH subunit catalyzes the hydrolysis of glutamine to glutamate and ammonia as part of the synthesis of IGP and AICAR. The resulting ammonia molecule is channeled to the active site of HisF.</text>
</comment>
<comment type="catalytic activity">
    <reaction evidence="1">
        <text>5-[(5-phospho-1-deoxy-D-ribulos-1-ylimino)methylamino]-1-(5-phospho-beta-D-ribosyl)imidazole-4-carboxamide + L-glutamine = D-erythro-1-(imidazol-4-yl)glycerol 3-phosphate + 5-amino-1-(5-phospho-beta-D-ribosyl)imidazole-4-carboxamide + L-glutamate + H(+)</text>
        <dbReference type="Rhea" id="RHEA:24793"/>
        <dbReference type="ChEBI" id="CHEBI:15378"/>
        <dbReference type="ChEBI" id="CHEBI:29985"/>
        <dbReference type="ChEBI" id="CHEBI:58278"/>
        <dbReference type="ChEBI" id="CHEBI:58359"/>
        <dbReference type="ChEBI" id="CHEBI:58475"/>
        <dbReference type="ChEBI" id="CHEBI:58525"/>
        <dbReference type="EC" id="4.3.2.10"/>
    </reaction>
</comment>
<comment type="catalytic activity">
    <reaction evidence="1">
        <text>L-glutamine + H2O = L-glutamate + NH4(+)</text>
        <dbReference type="Rhea" id="RHEA:15889"/>
        <dbReference type="ChEBI" id="CHEBI:15377"/>
        <dbReference type="ChEBI" id="CHEBI:28938"/>
        <dbReference type="ChEBI" id="CHEBI:29985"/>
        <dbReference type="ChEBI" id="CHEBI:58359"/>
        <dbReference type="EC" id="3.5.1.2"/>
    </reaction>
</comment>
<comment type="pathway">
    <text evidence="1">Amino-acid biosynthesis; L-histidine biosynthesis; L-histidine from 5-phospho-alpha-D-ribose 1-diphosphate: step 5/9.</text>
</comment>
<comment type="subunit">
    <text evidence="1">Heterodimer of HisH and HisF.</text>
</comment>
<comment type="subcellular location">
    <subcellularLocation>
        <location evidence="1">Cytoplasm</location>
    </subcellularLocation>
</comment>
<organism>
    <name type="scientific">Pyrococcus furiosus (strain ATCC 43587 / DSM 3638 / JCM 8422 / Vc1)</name>
    <dbReference type="NCBI Taxonomy" id="186497"/>
    <lineage>
        <taxon>Archaea</taxon>
        <taxon>Methanobacteriati</taxon>
        <taxon>Methanobacteriota</taxon>
        <taxon>Thermococci</taxon>
        <taxon>Thermococcales</taxon>
        <taxon>Thermococcaceae</taxon>
        <taxon>Pyrococcus</taxon>
    </lineage>
</organism>
<keyword id="KW-0028">Amino-acid biosynthesis</keyword>
<keyword id="KW-0963">Cytoplasm</keyword>
<keyword id="KW-0315">Glutamine amidotransferase</keyword>
<keyword id="KW-0368">Histidine biosynthesis</keyword>
<keyword id="KW-0378">Hydrolase</keyword>
<keyword id="KW-0456">Lyase</keyword>
<keyword id="KW-1185">Reference proteome</keyword>
<dbReference type="EC" id="4.3.2.10" evidence="1"/>
<dbReference type="EC" id="3.5.1.2" evidence="1"/>
<dbReference type="EMBL" id="AE009950">
    <property type="protein sequence ID" value="AAL81785.1"/>
    <property type="molecule type" value="Genomic_DNA"/>
</dbReference>
<dbReference type="RefSeq" id="WP_011012807.1">
    <property type="nucleotide sequence ID" value="NZ_CP023154.1"/>
</dbReference>
<dbReference type="SMR" id="P58789"/>
<dbReference type="STRING" id="186497.PF1661"/>
<dbReference type="MEROPS" id="C26.965"/>
<dbReference type="PaxDb" id="186497-PF1661"/>
<dbReference type="GeneID" id="41713489"/>
<dbReference type="KEGG" id="pfu:PF1661"/>
<dbReference type="PATRIC" id="fig|186497.12.peg.1727"/>
<dbReference type="eggNOG" id="arCOG00089">
    <property type="taxonomic scope" value="Archaea"/>
</dbReference>
<dbReference type="HOGENOM" id="CLU_071837_2_2_2"/>
<dbReference type="OrthoDB" id="33401at2157"/>
<dbReference type="PhylomeDB" id="P58789"/>
<dbReference type="UniPathway" id="UPA00031">
    <property type="reaction ID" value="UER00010"/>
</dbReference>
<dbReference type="Proteomes" id="UP000001013">
    <property type="component" value="Chromosome"/>
</dbReference>
<dbReference type="GO" id="GO:0005737">
    <property type="term" value="C:cytoplasm"/>
    <property type="evidence" value="ECO:0007669"/>
    <property type="project" value="UniProtKB-SubCell"/>
</dbReference>
<dbReference type="GO" id="GO:0004359">
    <property type="term" value="F:glutaminase activity"/>
    <property type="evidence" value="ECO:0007669"/>
    <property type="project" value="UniProtKB-EC"/>
</dbReference>
<dbReference type="GO" id="GO:0000107">
    <property type="term" value="F:imidazoleglycerol-phosphate synthase activity"/>
    <property type="evidence" value="ECO:0007669"/>
    <property type="project" value="UniProtKB-UniRule"/>
</dbReference>
<dbReference type="GO" id="GO:0016829">
    <property type="term" value="F:lyase activity"/>
    <property type="evidence" value="ECO:0007669"/>
    <property type="project" value="UniProtKB-KW"/>
</dbReference>
<dbReference type="GO" id="GO:0000105">
    <property type="term" value="P:L-histidine biosynthetic process"/>
    <property type="evidence" value="ECO:0007669"/>
    <property type="project" value="UniProtKB-UniRule"/>
</dbReference>
<dbReference type="CDD" id="cd01748">
    <property type="entry name" value="GATase1_IGP_Synthase"/>
    <property type="match status" value="1"/>
</dbReference>
<dbReference type="Gene3D" id="3.40.50.880">
    <property type="match status" value="1"/>
</dbReference>
<dbReference type="HAMAP" id="MF_00278">
    <property type="entry name" value="HisH"/>
    <property type="match status" value="1"/>
</dbReference>
<dbReference type="InterPro" id="IPR029062">
    <property type="entry name" value="Class_I_gatase-like"/>
</dbReference>
<dbReference type="InterPro" id="IPR017926">
    <property type="entry name" value="GATASE"/>
</dbReference>
<dbReference type="InterPro" id="IPR010139">
    <property type="entry name" value="Imidazole-glycPsynth_HisH"/>
</dbReference>
<dbReference type="NCBIfam" id="TIGR01855">
    <property type="entry name" value="IMP_synth_hisH"/>
    <property type="match status" value="1"/>
</dbReference>
<dbReference type="PANTHER" id="PTHR42701">
    <property type="entry name" value="IMIDAZOLE GLYCEROL PHOSPHATE SYNTHASE SUBUNIT HISH"/>
    <property type="match status" value="1"/>
</dbReference>
<dbReference type="PANTHER" id="PTHR42701:SF1">
    <property type="entry name" value="IMIDAZOLE GLYCEROL PHOSPHATE SYNTHASE SUBUNIT HISH"/>
    <property type="match status" value="1"/>
</dbReference>
<dbReference type="Pfam" id="PF00117">
    <property type="entry name" value="GATase"/>
    <property type="match status" value="1"/>
</dbReference>
<dbReference type="PIRSF" id="PIRSF000495">
    <property type="entry name" value="Amidotransf_hisH"/>
    <property type="match status" value="1"/>
</dbReference>
<dbReference type="SUPFAM" id="SSF52317">
    <property type="entry name" value="Class I glutamine amidotransferase-like"/>
    <property type="match status" value="1"/>
</dbReference>
<dbReference type="PROSITE" id="PS51273">
    <property type="entry name" value="GATASE_TYPE_1"/>
    <property type="match status" value="1"/>
</dbReference>
<reference key="1">
    <citation type="journal article" date="1999" name="Genetics">
        <title>Divergence of the hyperthermophilic archaea Pyrococcus furiosus and P. horikoshii inferred from complete genomic sequences.</title>
        <authorList>
            <person name="Maeder D.L."/>
            <person name="Weiss R.B."/>
            <person name="Dunn D.M."/>
            <person name="Cherry J.L."/>
            <person name="Gonzalez J.M."/>
            <person name="DiRuggiero J."/>
            <person name="Robb F.T."/>
        </authorList>
    </citation>
    <scope>NUCLEOTIDE SEQUENCE [LARGE SCALE GENOMIC DNA]</scope>
    <source>
        <strain>ATCC 43587 / DSM 3638 / JCM 8422 / Vc1</strain>
    </source>
</reference>
<sequence>MDRIAIVDLGIGNLANVKKALKGYITSDPYEIEKADKIVLPGVGNFGAVVDKLAPIKDIIIEGINEGKPFLGICLGMQLLFEESEESPGKEGLGIFKGKVVKLKNVRTPHIGWNQVWIKKECKLFEGLKNGSYFYFVHSYHAVPQDPDIIATTTDYENAEFVSSVCFENIFGVQFHPEKSSKNGLILLRNFRRL</sequence>
<gene>
    <name evidence="1" type="primary">hisH</name>
    <name type="ordered locus">PF1661</name>
</gene>
<feature type="chain" id="PRO_0000152466" description="Imidazole glycerol phosphate synthase subunit HisH">
    <location>
        <begin position="1"/>
        <end position="194"/>
    </location>
</feature>
<feature type="domain" description="Glutamine amidotransferase type-1" evidence="1">
    <location>
        <begin position="3"/>
        <end position="194"/>
    </location>
</feature>
<feature type="active site" description="Nucleophile" evidence="1">
    <location>
        <position position="74"/>
    </location>
</feature>
<feature type="active site" evidence="1">
    <location>
        <position position="176"/>
    </location>
</feature>
<feature type="active site" evidence="1">
    <location>
        <position position="178"/>
    </location>
</feature>
<accession>P58789</accession>
<name>HIS5_PYRFU</name>
<proteinExistence type="inferred from homology"/>
<protein>
    <recommendedName>
        <fullName evidence="1">Imidazole glycerol phosphate synthase subunit HisH</fullName>
        <ecNumber evidence="1">4.3.2.10</ecNumber>
    </recommendedName>
    <alternativeName>
        <fullName evidence="1">IGP synthase glutaminase subunit</fullName>
        <ecNumber evidence="1">3.5.1.2</ecNumber>
    </alternativeName>
    <alternativeName>
        <fullName evidence="1">IGP synthase subunit HisH</fullName>
    </alternativeName>
    <alternativeName>
        <fullName evidence="1">ImGP synthase subunit HisH</fullName>
        <shortName evidence="1">IGPS subunit HisH</shortName>
    </alternativeName>
</protein>
<evidence type="ECO:0000255" key="1">
    <source>
        <dbReference type="HAMAP-Rule" id="MF_00278"/>
    </source>
</evidence>